<protein>
    <recommendedName>
        <fullName>mgtA leader peptide</fullName>
    </recommendedName>
    <alternativeName>
        <fullName>Regulatory leader peptide for mgtA</fullName>
    </alternativeName>
</protein>
<keyword id="KW-0428">Leader peptide</keyword>
<sequence length="17" mass="2123">MEPDPTPLPRRRLKLFR</sequence>
<name>LPMG_ECOHS</name>
<feature type="chain" id="PRO_0000403458" description="mgtA leader peptide">
    <location>
        <begin position="1"/>
        <end position="17"/>
    </location>
</feature>
<comment type="function">
    <text evidence="1">Makes mgtA transcription sensitive to intracellular proline levels. Under low levels of proline this protein cannot be fully translated, and a stem loop forms which permits transcription of the downstream mgtA gene (By similarity).</text>
</comment>
<comment type="similarity">
    <text evidence="2">Belongs to the MgtL family.</text>
</comment>
<comment type="sequence caution" evidence="2">
    <conflict type="erroneous initiation">
        <sequence resource="EMBL-CDS" id="ABV08652"/>
    </conflict>
    <text>Extended N-terminus.</text>
</comment>
<accession>A8A7Z8</accession>
<gene>
    <name type="primary">mgtL</name>
    <name type="ordered locus">EcHS_A4496</name>
</gene>
<reference key="1">
    <citation type="journal article" date="2008" name="J. Bacteriol.">
        <title>The pangenome structure of Escherichia coli: comparative genomic analysis of E. coli commensal and pathogenic isolates.</title>
        <authorList>
            <person name="Rasko D.A."/>
            <person name="Rosovitz M.J."/>
            <person name="Myers G.S.A."/>
            <person name="Mongodin E.F."/>
            <person name="Fricke W.F."/>
            <person name="Gajer P."/>
            <person name="Crabtree J."/>
            <person name="Sebaihia M."/>
            <person name="Thomson N.R."/>
            <person name="Chaudhuri R."/>
            <person name="Henderson I.R."/>
            <person name="Sperandio V."/>
            <person name="Ravel J."/>
        </authorList>
    </citation>
    <scope>NUCLEOTIDE SEQUENCE [LARGE SCALE GENOMIC DNA]</scope>
    <source>
        <strain>HS</strain>
    </source>
</reference>
<organism>
    <name type="scientific">Escherichia coli O9:H4 (strain HS)</name>
    <dbReference type="NCBI Taxonomy" id="331112"/>
    <lineage>
        <taxon>Bacteria</taxon>
        <taxon>Pseudomonadati</taxon>
        <taxon>Pseudomonadota</taxon>
        <taxon>Gammaproteobacteria</taxon>
        <taxon>Enterobacterales</taxon>
        <taxon>Enterobacteriaceae</taxon>
        <taxon>Escherichia</taxon>
    </lineage>
</organism>
<proteinExistence type="inferred from homology"/>
<dbReference type="EMBL" id="CP000802">
    <property type="protein sequence ID" value="ABV08652.1"/>
    <property type="status" value="ALT_INIT"/>
    <property type="molecule type" value="Genomic_DNA"/>
</dbReference>
<dbReference type="RefSeq" id="WP_001387276.1">
    <property type="nucleotide sequence ID" value="NC_009800.1"/>
</dbReference>
<dbReference type="GeneID" id="93777583"/>
<dbReference type="KEGG" id="ecx:EcHS_A4496"/>
<dbReference type="HOGENOM" id="CLU_2896927_0_0_6"/>
<dbReference type="InterPro" id="IPR031434">
    <property type="entry name" value="MGTL"/>
</dbReference>
<dbReference type="Pfam" id="PF17059">
    <property type="entry name" value="MGTL"/>
    <property type="match status" value="1"/>
</dbReference>
<evidence type="ECO:0000250" key="1"/>
<evidence type="ECO:0000305" key="2"/>